<dbReference type="EMBL" id="CP000964">
    <property type="protein sequence ID" value="ACI08785.1"/>
    <property type="molecule type" value="Genomic_DNA"/>
</dbReference>
<dbReference type="SMR" id="B5XN76"/>
<dbReference type="KEGG" id="kpe:KPK_0381"/>
<dbReference type="HOGENOM" id="CLU_005126_9_3_6"/>
<dbReference type="Proteomes" id="UP000001734">
    <property type="component" value="Chromosome"/>
</dbReference>
<dbReference type="GO" id="GO:0005886">
    <property type="term" value="C:plasma membrane"/>
    <property type="evidence" value="ECO:0007669"/>
    <property type="project" value="UniProtKB-SubCell"/>
</dbReference>
<dbReference type="GO" id="GO:0015503">
    <property type="term" value="F:glutathione-regulated potassium exporter activity"/>
    <property type="evidence" value="ECO:0007669"/>
    <property type="project" value="UniProtKB-UniRule"/>
</dbReference>
<dbReference type="GO" id="GO:1902600">
    <property type="term" value="P:proton transmembrane transport"/>
    <property type="evidence" value="ECO:0007669"/>
    <property type="project" value="InterPro"/>
</dbReference>
<dbReference type="FunFam" id="1.20.1530.20:FF:000001">
    <property type="entry name" value="Glutathione-regulated potassium-efflux system protein KefB"/>
    <property type="match status" value="1"/>
</dbReference>
<dbReference type="FunFam" id="3.40.50.720:FF:000036">
    <property type="entry name" value="Glutathione-regulated potassium-efflux system protein KefB"/>
    <property type="match status" value="1"/>
</dbReference>
<dbReference type="Gene3D" id="1.20.1530.20">
    <property type="match status" value="1"/>
</dbReference>
<dbReference type="Gene3D" id="3.40.50.720">
    <property type="entry name" value="NAD(P)-binding Rossmann-like Domain"/>
    <property type="match status" value="1"/>
</dbReference>
<dbReference type="HAMAP" id="MF_01412">
    <property type="entry name" value="K_H_efflux_KefB"/>
    <property type="match status" value="1"/>
</dbReference>
<dbReference type="InterPro" id="IPR006153">
    <property type="entry name" value="Cation/H_exchanger_TM"/>
</dbReference>
<dbReference type="InterPro" id="IPR004771">
    <property type="entry name" value="K/H_exchanger"/>
</dbReference>
<dbReference type="InterPro" id="IPR020884">
    <property type="entry name" value="K_H_efflux_KefB"/>
</dbReference>
<dbReference type="InterPro" id="IPR038770">
    <property type="entry name" value="Na+/solute_symporter_sf"/>
</dbReference>
<dbReference type="InterPro" id="IPR036291">
    <property type="entry name" value="NAD(P)-bd_dom_sf"/>
</dbReference>
<dbReference type="InterPro" id="IPR003148">
    <property type="entry name" value="RCK_N"/>
</dbReference>
<dbReference type="NCBIfam" id="TIGR00932">
    <property type="entry name" value="2a37"/>
    <property type="match status" value="1"/>
</dbReference>
<dbReference type="NCBIfam" id="NF002973">
    <property type="entry name" value="PRK03659.1"/>
    <property type="match status" value="1"/>
</dbReference>
<dbReference type="PANTHER" id="PTHR46157">
    <property type="entry name" value="K(+) EFFLUX ANTIPORTER 3, CHLOROPLASTIC"/>
    <property type="match status" value="1"/>
</dbReference>
<dbReference type="PANTHER" id="PTHR46157:SF4">
    <property type="entry name" value="K(+) EFFLUX ANTIPORTER 3, CHLOROPLASTIC"/>
    <property type="match status" value="1"/>
</dbReference>
<dbReference type="Pfam" id="PF00999">
    <property type="entry name" value="Na_H_Exchanger"/>
    <property type="match status" value="1"/>
</dbReference>
<dbReference type="Pfam" id="PF02254">
    <property type="entry name" value="TrkA_N"/>
    <property type="match status" value="1"/>
</dbReference>
<dbReference type="SUPFAM" id="SSF51735">
    <property type="entry name" value="NAD(P)-binding Rossmann-fold domains"/>
    <property type="match status" value="1"/>
</dbReference>
<dbReference type="PROSITE" id="PS51201">
    <property type="entry name" value="RCK_N"/>
    <property type="match status" value="1"/>
</dbReference>
<evidence type="ECO:0000255" key="1">
    <source>
        <dbReference type="HAMAP-Rule" id="MF_01412"/>
    </source>
</evidence>
<evidence type="ECO:0000255" key="2">
    <source>
        <dbReference type="PROSITE-ProRule" id="PRU00543"/>
    </source>
</evidence>
<name>KEFB_KLEP3</name>
<sequence length="601" mass="66020">MAGSDLLLAGVLFLFAAVIAVPLASRLGIGAVLGYLLAGIAIGPWGLGFISDVDEILHFSELGVVFLMFIIGLELNPAKLWRLRSSIFGVGAAQVMLSAAILGGLLMTTGFSWQAAVVGGIGLAMSSTAMALQLMREKGMSRSESGQLGFSVLLFQDLAVIPALALVPLLAGSADEHVNWLTVGMKVLAFAGMLIGGRYLLRPVFRFIASSGVREVFTAATLLLVLGSALFMEALGLSMALGTFIAGVLLAESEYRHELEIAIDPFKGLLLGLFFISVGMALNLGVLYTHLLWVAVSVAVLVAVKMLVLYLLARLYGLRSSERMQFAGVLSQGGEFAFVLFSLPASQRLFQHDQMALLLVAVTLSMMTTPLLMKGIDKLLSRRLNPADDTDEAPWVEDDKPQVIIVGFGRFGQVIGRLLMANKMRITVLERDISAVNLMRNYGYKVYFGDATQLELLRSAGAEEAQSIVITCNEPEDTMRLVEMCQQHFPHLHILARARGRVEAHELLQAGVTQFSRETFSSALELGRKALITLGMHPHQAQRAQLHFRRLDMRMLRELMPVHTDTVQVSRVREARRELEEIFQREMQKESRQLDGWDEFE</sequence>
<gene>
    <name evidence="1" type="primary">kefB</name>
    <name type="ordered locus">KPK_0381</name>
</gene>
<comment type="function">
    <text evidence="1">Pore-forming subunit of a potassium efflux system that confers protection against electrophiles. Catalyzes K(+)/H(+) antiport.</text>
</comment>
<comment type="subunit">
    <text evidence="1">Interacts with the regulatory subunit KefG.</text>
</comment>
<comment type="subcellular location">
    <subcellularLocation>
        <location evidence="1">Cell inner membrane</location>
        <topology evidence="1">Multi-pass membrane protein</topology>
    </subcellularLocation>
</comment>
<comment type="similarity">
    <text evidence="1">Belongs to the monovalent cation:proton antiporter 2 (CPA2) transporter (TC 2.A.37) family. KefB subfamily.</text>
</comment>
<keyword id="KW-0050">Antiport</keyword>
<keyword id="KW-0997">Cell inner membrane</keyword>
<keyword id="KW-1003">Cell membrane</keyword>
<keyword id="KW-0406">Ion transport</keyword>
<keyword id="KW-0472">Membrane</keyword>
<keyword id="KW-0630">Potassium</keyword>
<keyword id="KW-0633">Potassium transport</keyword>
<keyword id="KW-0812">Transmembrane</keyword>
<keyword id="KW-1133">Transmembrane helix</keyword>
<keyword id="KW-0813">Transport</keyword>
<accession>B5XN76</accession>
<proteinExistence type="inferred from homology"/>
<organism>
    <name type="scientific">Klebsiella pneumoniae (strain 342)</name>
    <dbReference type="NCBI Taxonomy" id="507522"/>
    <lineage>
        <taxon>Bacteria</taxon>
        <taxon>Pseudomonadati</taxon>
        <taxon>Pseudomonadota</taxon>
        <taxon>Gammaproteobacteria</taxon>
        <taxon>Enterobacterales</taxon>
        <taxon>Enterobacteriaceae</taxon>
        <taxon>Klebsiella/Raoultella group</taxon>
        <taxon>Klebsiella</taxon>
        <taxon>Klebsiella pneumoniae complex</taxon>
    </lineage>
</organism>
<protein>
    <recommendedName>
        <fullName evidence="1">Glutathione-regulated potassium-efflux system protein KefB</fullName>
    </recommendedName>
    <alternativeName>
        <fullName evidence="1">K(+)/H(+) antiporter</fullName>
    </alternativeName>
</protein>
<feature type="chain" id="PRO_1000145524" description="Glutathione-regulated potassium-efflux system protein KefB">
    <location>
        <begin position="1"/>
        <end position="601"/>
    </location>
</feature>
<feature type="transmembrane region" description="Helical" evidence="1">
    <location>
        <begin position="4"/>
        <end position="24"/>
    </location>
</feature>
<feature type="transmembrane region" description="Helical" evidence="1">
    <location>
        <begin position="29"/>
        <end position="49"/>
    </location>
</feature>
<feature type="transmembrane region" description="Helical" evidence="1">
    <location>
        <begin position="55"/>
        <end position="75"/>
    </location>
</feature>
<feature type="transmembrane region" description="Helical" evidence="1">
    <location>
        <begin position="87"/>
        <end position="107"/>
    </location>
</feature>
<feature type="transmembrane region" description="Helical" evidence="1">
    <location>
        <begin position="115"/>
        <end position="135"/>
    </location>
</feature>
<feature type="transmembrane region" description="Helical" evidence="1">
    <location>
        <begin position="152"/>
        <end position="172"/>
    </location>
</feature>
<feature type="transmembrane region" description="Helical" evidence="1">
    <location>
        <begin position="177"/>
        <end position="197"/>
    </location>
</feature>
<feature type="transmembrane region" description="Helical" evidence="1">
    <location>
        <begin position="207"/>
        <end position="227"/>
    </location>
</feature>
<feature type="transmembrane region" description="Helical" evidence="1">
    <location>
        <begin position="230"/>
        <end position="250"/>
    </location>
</feature>
<feature type="transmembrane region" description="Helical" evidence="1">
    <location>
        <begin position="268"/>
        <end position="288"/>
    </location>
</feature>
<feature type="transmembrane region" description="Helical" evidence="1">
    <location>
        <begin position="291"/>
        <end position="311"/>
    </location>
</feature>
<feature type="transmembrane region" description="Helical" evidence="1">
    <location>
        <begin position="326"/>
        <end position="346"/>
    </location>
</feature>
<feature type="transmembrane region" description="Helical" evidence="1">
    <location>
        <begin position="356"/>
        <end position="376"/>
    </location>
</feature>
<feature type="domain" description="RCK N-terminal" evidence="2">
    <location>
        <begin position="400"/>
        <end position="519"/>
    </location>
</feature>
<reference key="1">
    <citation type="journal article" date="2008" name="PLoS Genet.">
        <title>Complete genome sequence of the N2-fixing broad host range endophyte Klebsiella pneumoniae 342 and virulence predictions verified in mice.</title>
        <authorList>
            <person name="Fouts D.E."/>
            <person name="Tyler H.L."/>
            <person name="DeBoy R.T."/>
            <person name="Daugherty S."/>
            <person name="Ren Q."/>
            <person name="Badger J.H."/>
            <person name="Durkin A.S."/>
            <person name="Huot H."/>
            <person name="Shrivastava S."/>
            <person name="Kothari S."/>
            <person name="Dodson R.J."/>
            <person name="Mohamoud Y."/>
            <person name="Khouri H."/>
            <person name="Roesch L.F.W."/>
            <person name="Krogfelt K.A."/>
            <person name="Struve C."/>
            <person name="Triplett E.W."/>
            <person name="Methe B.A."/>
        </authorList>
    </citation>
    <scope>NUCLEOTIDE SEQUENCE [LARGE SCALE GENOMIC DNA]</scope>
    <source>
        <strain>342</strain>
    </source>
</reference>